<protein>
    <recommendedName>
        <fullName>4-diphosphocytidyl-2-C-methyl-D-erythritol kinase</fullName>
        <shortName>CMK</shortName>
        <ecNumber>2.7.1.148</ecNumber>
    </recommendedName>
    <alternativeName>
        <fullName>4-(cytidine-5'-diphospho)-2-C-methyl-D-erythritol kinase</fullName>
    </alternativeName>
</protein>
<comment type="function">
    <text evidence="1">Catalyzes the phosphorylation of the position 2 hydroxy group of 4-diphosphocytidyl-2C-methyl-D-erythritol.</text>
</comment>
<comment type="catalytic activity">
    <reaction>
        <text>4-CDP-2-C-methyl-D-erythritol + ATP = 4-CDP-2-C-methyl-D-erythritol 2-phosphate + ADP + H(+)</text>
        <dbReference type="Rhea" id="RHEA:18437"/>
        <dbReference type="ChEBI" id="CHEBI:15378"/>
        <dbReference type="ChEBI" id="CHEBI:30616"/>
        <dbReference type="ChEBI" id="CHEBI:57823"/>
        <dbReference type="ChEBI" id="CHEBI:57919"/>
        <dbReference type="ChEBI" id="CHEBI:456216"/>
        <dbReference type="EC" id="2.7.1.148"/>
    </reaction>
</comment>
<comment type="pathway">
    <text>Isoprenoid biosynthesis; isopentenyl diphosphate biosynthesis via DXP pathway; isopentenyl diphosphate from 1-deoxy-D-xylulose 5-phosphate: step 3/6.</text>
</comment>
<comment type="subunit">
    <text evidence="3">Homodimer.</text>
</comment>
<comment type="similarity">
    <text evidence="4">Belongs to the GHMP kinase family. IspE subfamily.</text>
</comment>
<keyword id="KW-0002">3D-structure</keyword>
<keyword id="KW-0067">ATP-binding</keyword>
<keyword id="KW-0414">Isoprene biosynthesis</keyword>
<keyword id="KW-0418">Kinase</keyword>
<keyword id="KW-0547">Nucleotide-binding</keyword>
<keyword id="KW-1185">Reference proteome</keyword>
<keyword id="KW-0808">Transferase</keyword>
<gene>
    <name type="primary">ispE</name>
    <name type="ordered locus">c1666</name>
</gene>
<organism>
    <name type="scientific">Escherichia coli O6:H1 (strain CFT073 / ATCC 700928 / UPEC)</name>
    <dbReference type="NCBI Taxonomy" id="199310"/>
    <lineage>
        <taxon>Bacteria</taxon>
        <taxon>Pseudomonadati</taxon>
        <taxon>Pseudomonadota</taxon>
        <taxon>Gammaproteobacteria</taxon>
        <taxon>Enterobacterales</taxon>
        <taxon>Enterobacteriaceae</taxon>
        <taxon>Escherichia</taxon>
    </lineage>
</organism>
<dbReference type="EC" id="2.7.1.148"/>
<dbReference type="EMBL" id="AE014075">
    <property type="protein sequence ID" value="AAN80131.1"/>
    <property type="molecule type" value="Genomic_DNA"/>
</dbReference>
<dbReference type="RefSeq" id="WP_001260345.1">
    <property type="nucleotide sequence ID" value="NZ_CP051263.1"/>
</dbReference>
<dbReference type="PDB" id="1OJ4">
    <property type="method" value="X-ray"/>
    <property type="resolution" value="2.01 A"/>
    <property type="chains" value="A/B=1-283"/>
</dbReference>
<dbReference type="PDBsum" id="1OJ4"/>
<dbReference type="SMR" id="Q8FI04"/>
<dbReference type="STRING" id="199310.c1666"/>
<dbReference type="KEGG" id="ecc:c1666"/>
<dbReference type="eggNOG" id="COG1947">
    <property type="taxonomic scope" value="Bacteria"/>
</dbReference>
<dbReference type="HOGENOM" id="CLU_053057_3_0_6"/>
<dbReference type="BioCyc" id="ECOL199310:C1666-MONOMER"/>
<dbReference type="UniPathway" id="UPA00056">
    <property type="reaction ID" value="UER00094"/>
</dbReference>
<dbReference type="EvolutionaryTrace" id="Q8FI04"/>
<dbReference type="Proteomes" id="UP000001410">
    <property type="component" value="Chromosome"/>
</dbReference>
<dbReference type="GO" id="GO:0050515">
    <property type="term" value="F:4-(cytidine 5'-diphospho)-2-C-methyl-D-erythritol kinase activity"/>
    <property type="evidence" value="ECO:0007669"/>
    <property type="project" value="UniProtKB-UniRule"/>
</dbReference>
<dbReference type="GO" id="GO:0005524">
    <property type="term" value="F:ATP binding"/>
    <property type="evidence" value="ECO:0007669"/>
    <property type="project" value="UniProtKB-UniRule"/>
</dbReference>
<dbReference type="GO" id="GO:0019288">
    <property type="term" value="P:isopentenyl diphosphate biosynthetic process, methylerythritol 4-phosphate pathway"/>
    <property type="evidence" value="ECO:0007669"/>
    <property type="project" value="UniProtKB-UniRule"/>
</dbReference>
<dbReference type="GO" id="GO:0016114">
    <property type="term" value="P:terpenoid biosynthetic process"/>
    <property type="evidence" value="ECO:0007669"/>
    <property type="project" value="InterPro"/>
</dbReference>
<dbReference type="FunFam" id="3.30.230.10:FF:000022">
    <property type="entry name" value="4-diphosphocytidyl-2-C-methyl-D-erythritol kinase"/>
    <property type="match status" value="1"/>
</dbReference>
<dbReference type="FunFam" id="3.30.70.890:FF:000004">
    <property type="entry name" value="4-diphosphocytidyl-2-C-methyl-D-erythritol kinase"/>
    <property type="match status" value="1"/>
</dbReference>
<dbReference type="Gene3D" id="3.30.230.10">
    <property type="match status" value="1"/>
</dbReference>
<dbReference type="Gene3D" id="3.30.70.890">
    <property type="entry name" value="GHMP kinase, C-terminal domain"/>
    <property type="match status" value="1"/>
</dbReference>
<dbReference type="HAMAP" id="MF_00061">
    <property type="entry name" value="IspE"/>
    <property type="match status" value="1"/>
</dbReference>
<dbReference type="InterPro" id="IPR013750">
    <property type="entry name" value="GHMP_kinase_C_dom"/>
</dbReference>
<dbReference type="InterPro" id="IPR036554">
    <property type="entry name" value="GHMP_kinase_C_sf"/>
</dbReference>
<dbReference type="InterPro" id="IPR006204">
    <property type="entry name" value="GHMP_kinase_N_dom"/>
</dbReference>
<dbReference type="InterPro" id="IPR004424">
    <property type="entry name" value="IspE"/>
</dbReference>
<dbReference type="InterPro" id="IPR020568">
    <property type="entry name" value="Ribosomal_Su5_D2-typ_SF"/>
</dbReference>
<dbReference type="InterPro" id="IPR014721">
    <property type="entry name" value="Ribsml_uS5_D2-typ_fold_subgr"/>
</dbReference>
<dbReference type="NCBIfam" id="TIGR00154">
    <property type="entry name" value="ispE"/>
    <property type="match status" value="1"/>
</dbReference>
<dbReference type="PANTHER" id="PTHR43527">
    <property type="entry name" value="4-DIPHOSPHOCYTIDYL-2-C-METHYL-D-ERYTHRITOL KINASE, CHLOROPLASTIC"/>
    <property type="match status" value="1"/>
</dbReference>
<dbReference type="PANTHER" id="PTHR43527:SF2">
    <property type="entry name" value="4-DIPHOSPHOCYTIDYL-2-C-METHYL-D-ERYTHRITOL KINASE, CHLOROPLASTIC"/>
    <property type="match status" value="1"/>
</dbReference>
<dbReference type="Pfam" id="PF08544">
    <property type="entry name" value="GHMP_kinases_C"/>
    <property type="match status" value="1"/>
</dbReference>
<dbReference type="Pfam" id="PF00288">
    <property type="entry name" value="GHMP_kinases_N"/>
    <property type="match status" value="1"/>
</dbReference>
<dbReference type="PIRSF" id="PIRSF010376">
    <property type="entry name" value="IspE"/>
    <property type="match status" value="1"/>
</dbReference>
<dbReference type="SUPFAM" id="SSF55060">
    <property type="entry name" value="GHMP Kinase, C-terminal domain"/>
    <property type="match status" value="1"/>
</dbReference>
<dbReference type="SUPFAM" id="SSF54211">
    <property type="entry name" value="Ribosomal protein S5 domain 2-like"/>
    <property type="match status" value="1"/>
</dbReference>
<accession>Q8FI04</accession>
<evidence type="ECO:0000250" key="1"/>
<evidence type="ECO:0000255" key="2"/>
<evidence type="ECO:0000269" key="3">
    <source>
    </source>
</evidence>
<evidence type="ECO:0000305" key="4"/>
<evidence type="ECO:0007829" key="5">
    <source>
        <dbReference type="PDB" id="1OJ4"/>
    </source>
</evidence>
<sequence length="283" mass="30973">MRTQWPSPAKLNLFLYITGQRADGYHTLQTLFQFLDYGDTISIELRDDGDIRLLTPVEGVEHEDNLIVRAARLLMKTAADSGRLSTGSGANISIDKRLPMGGGLGGGSSNAATVLVALNHLWQCGLSMDELAEMGLTLGADVPVFVRGHAAFAEGVGEILMPVDPPEKWYLVAHPGVSIPTPVIFKDPELPRNTPKRSIETLLKCEFSNDCEVIARKRFREVDAVLSWLLEYAPSRLTGTGACVFAEFDTESEARQVLEQAPEWLNGFVAKGVNLSPLHRAML</sequence>
<reference key="1">
    <citation type="journal article" date="2002" name="Proc. Natl. Acad. Sci. U.S.A.">
        <title>Extensive mosaic structure revealed by the complete genome sequence of uropathogenic Escherichia coli.</title>
        <authorList>
            <person name="Welch R.A."/>
            <person name="Burland V."/>
            <person name="Plunkett G. III"/>
            <person name="Redford P."/>
            <person name="Roesch P."/>
            <person name="Rasko D."/>
            <person name="Buckles E.L."/>
            <person name="Liou S.-R."/>
            <person name="Boutin A."/>
            <person name="Hackett J."/>
            <person name="Stroud D."/>
            <person name="Mayhew G.F."/>
            <person name="Rose D.J."/>
            <person name="Zhou S."/>
            <person name="Schwartz D.C."/>
            <person name="Perna N.T."/>
            <person name="Mobley H.L.T."/>
            <person name="Donnenberg M.S."/>
            <person name="Blattner F.R."/>
        </authorList>
    </citation>
    <scope>NUCLEOTIDE SEQUENCE [LARGE SCALE GENOMIC DNA]</scope>
    <source>
        <strain>CFT073 / ATCC 700928 / UPEC</strain>
    </source>
</reference>
<reference key="2">
    <citation type="journal article" date="2003" name="Proc. Natl. Acad. Sci. U.S.A.">
        <title>Biosynthesis of isoprenoids: crystal structure of 4-diphosphocytidyl-2C-methyl-D-erythritol kinase.</title>
        <authorList>
            <person name="Miallau L."/>
            <person name="Alphey M.S."/>
            <person name="Kemp L.E."/>
            <person name="Leonard G.A."/>
            <person name="McSweeney S.M."/>
            <person name="Hecht S."/>
            <person name="Bacher A."/>
            <person name="Eisenreich W."/>
            <person name="Rohdich F."/>
            <person name="Hunter W.N."/>
        </authorList>
    </citation>
    <scope>X-RAY CRYSTALLOGRAPHY (2.01 ANGSTROMS)</scope>
    <scope>SUBUNIT</scope>
</reference>
<proteinExistence type="evidence at protein level"/>
<feature type="chain" id="PRO_0000189217" description="4-diphosphocytidyl-2-C-methyl-D-erythritol kinase">
    <location>
        <begin position="1"/>
        <end position="283"/>
    </location>
</feature>
<feature type="active site" evidence="4">
    <location>
        <position position="10"/>
    </location>
</feature>
<feature type="active site" evidence="4">
    <location>
        <position position="141"/>
    </location>
</feature>
<feature type="binding site" evidence="2">
    <location>
        <begin position="99"/>
        <end position="109"/>
    </location>
    <ligand>
        <name>ATP</name>
        <dbReference type="ChEBI" id="CHEBI:30616"/>
    </ligand>
</feature>
<feature type="strand" evidence="5">
    <location>
        <begin position="2"/>
        <end position="20"/>
    </location>
</feature>
<feature type="strand" evidence="5">
    <location>
        <begin position="26"/>
        <end position="49"/>
    </location>
</feature>
<feature type="strand" evidence="5">
    <location>
        <begin position="51"/>
        <end position="53"/>
    </location>
</feature>
<feature type="helix" evidence="5">
    <location>
        <begin position="62"/>
        <end position="64"/>
    </location>
</feature>
<feature type="helix" evidence="5">
    <location>
        <begin position="66"/>
        <end position="80"/>
    </location>
</feature>
<feature type="strand" evidence="5">
    <location>
        <begin position="89"/>
        <end position="95"/>
    </location>
</feature>
<feature type="helix" evidence="5">
    <location>
        <begin position="106"/>
        <end position="121"/>
    </location>
</feature>
<feature type="helix" evidence="5">
    <location>
        <begin position="128"/>
        <end position="135"/>
    </location>
</feature>
<feature type="helix" evidence="5">
    <location>
        <begin position="136"/>
        <end position="138"/>
    </location>
</feature>
<feature type="helix" evidence="5">
    <location>
        <begin position="142"/>
        <end position="147"/>
    </location>
</feature>
<feature type="strand" evidence="5">
    <location>
        <begin position="151"/>
        <end position="154"/>
    </location>
</feature>
<feature type="turn" evidence="5">
    <location>
        <begin position="155"/>
        <end position="158"/>
    </location>
</feature>
<feature type="strand" evidence="5">
    <location>
        <begin position="159"/>
        <end position="162"/>
    </location>
</feature>
<feature type="strand" evidence="5">
    <location>
        <begin position="169"/>
        <end position="173"/>
    </location>
</feature>
<feature type="helix" evidence="5">
    <location>
        <begin position="181"/>
        <end position="185"/>
    </location>
</feature>
<feature type="helix" evidence="5">
    <location>
        <begin position="199"/>
        <end position="204"/>
    </location>
</feature>
<feature type="helix" evidence="5">
    <location>
        <begin position="212"/>
        <end position="218"/>
    </location>
</feature>
<feature type="helix" evidence="5">
    <location>
        <begin position="220"/>
        <end position="229"/>
    </location>
</feature>
<feature type="turn" evidence="5">
    <location>
        <begin position="230"/>
        <end position="232"/>
    </location>
</feature>
<feature type="strand" evidence="5">
    <location>
        <begin position="235"/>
        <end position="237"/>
    </location>
</feature>
<feature type="strand" evidence="5">
    <location>
        <begin position="244"/>
        <end position="250"/>
    </location>
</feature>
<feature type="helix" evidence="5">
    <location>
        <begin position="251"/>
        <end position="260"/>
    </location>
</feature>
<feature type="helix" evidence="5">
    <location>
        <begin position="263"/>
        <end position="265"/>
    </location>
</feature>
<feature type="strand" evidence="5">
    <location>
        <begin position="268"/>
        <end position="275"/>
    </location>
</feature>
<feature type="helix" evidence="5">
    <location>
        <begin position="277"/>
        <end position="280"/>
    </location>
</feature>
<name>ISPE_ECOL6</name>